<name>PDCD4_RAT</name>
<evidence type="ECO:0000250" key="1"/>
<evidence type="ECO:0000250" key="2">
    <source>
        <dbReference type="UniProtKB" id="Q53EL6"/>
    </source>
</evidence>
<evidence type="ECO:0000255" key="3"/>
<evidence type="ECO:0000255" key="4">
    <source>
        <dbReference type="PROSITE-ProRule" id="PRU00698"/>
    </source>
</evidence>
<evidence type="ECO:0000256" key="5">
    <source>
        <dbReference type="SAM" id="MobiDB-lite"/>
    </source>
</evidence>
<evidence type="ECO:0000269" key="6">
    <source>
    </source>
</evidence>
<evidence type="ECO:0000303" key="7">
    <source>
    </source>
</evidence>
<evidence type="ECO:0000305" key="8"/>
<evidence type="ECO:0007744" key="9">
    <source>
    </source>
</evidence>
<keyword id="KW-0007">Acetylation</keyword>
<keyword id="KW-0025">Alternative splicing</keyword>
<keyword id="KW-0053">Apoptosis</keyword>
<keyword id="KW-0963">Cytoplasm</keyword>
<keyword id="KW-0539">Nucleus</keyword>
<keyword id="KW-0597">Phosphoprotein</keyword>
<keyword id="KW-1185">Reference proteome</keyword>
<keyword id="KW-0677">Repeat</keyword>
<keyword id="KW-0694">RNA-binding</keyword>
<keyword id="KW-0043">Tumor suppressor</keyword>
<keyword id="KW-0832">Ubl conjugation</keyword>
<gene>
    <name type="primary">Pdcd4</name>
    <name type="synonym">Dug</name>
</gene>
<dbReference type="EMBL" id="AF239739">
    <property type="protein sequence ID" value="AAF73961.2"/>
    <property type="molecule type" value="mRNA"/>
</dbReference>
<dbReference type="RefSeq" id="NP_071601.2">
    <molecule id="Q9JID1-1"/>
    <property type="nucleotide sequence ID" value="NM_022265.2"/>
</dbReference>
<dbReference type="RefSeq" id="XP_006231675.1">
    <property type="nucleotide sequence ID" value="XM_006231613.3"/>
</dbReference>
<dbReference type="RefSeq" id="XP_006231676.1">
    <property type="nucleotide sequence ID" value="XM_006231614.3"/>
</dbReference>
<dbReference type="RefSeq" id="XP_006231677.1">
    <molecule id="Q9JID1-1"/>
    <property type="nucleotide sequence ID" value="XM_006231615.5"/>
</dbReference>
<dbReference type="RefSeq" id="XP_006231678.1">
    <molecule id="Q9JID1-1"/>
    <property type="nucleotide sequence ID" value="XM_006231616.5"/>
</dbReference>
<dbReference type="RefSeq" id="XP_017445137.1">
    <property type="nucleotide sequence ID" value="XM_017589648.1"/>
</dbReference>
<dbReference type="RefSeq" id="XP_063128731.1">
    <molecule id="Q9JID1-1"/>
    <property type="nucleotide sequence ID" value="XM_063272661.1"/>
</dbReference>
<dbReference type="RefSeq" id="XP_063128732.1">
    <molecule id="Q9JID1-1"/>
    <property type="nucleotide sequence ID" value="XM_063272662.1"/>
</dbReference>
<dbReference type="RefSeq" id="XP_063128733.1">
    <molecule id="Q9JID1-1"/>
    <property type="nucleotide sequence ID" value="XM_063272663.1"/>
</dbReference>
<dbReference type="BMRB" id="Q9JID1"/>
<dbReference type="SMR" id="Q9JID1"/>
<dbReference type="FunCoup" id="Q9JID1">
    <property type="interactions" value="3615"/>
</dbReference>
<dbReference type="IntAct" id="Q9JID1">
    <property type="interactions" value="1"/>
</dbReference>
<dbReference type="MINT" id="Q9JID1"/>
<dbReference type="STRING" id="10116.ENSRNOP00000020155"/>
<dbReference type="GlyGen" id="Q9JID1">
    <property type="glycosylation" value="1 site"/>
</dbReference>
<dbReference type="iPTMnet" id="Q9JID1"/>
<dbReference type="PhosphoSitePlus" id="Q9JID1"/>
<dbReference type="PaxDb" id="10116-ENSRNOP00000020155"/>
<dbReference type="Ensembl" id="ENSRNOT00000097657.1">
    <molecule id="Q9JID1-2"/>
    <property type="protein sequence ID" value="ENSRNOP00000091790.1"/>
    <property type="gene ID" value="ENSRNOG00000014779.6"/>
</dbReference>
<dbReference type="Ensembl" id="ENSRNOT00000119971.1">
    <molecule id="Q9JID1-1"/>
    <property type="protein sequence ID" value="ENSRNOP00000076366.1"/>
    <property type="gene ID" value="ENSRNOG00000014779.6"/>
</dbReference>
<dbReference type="GeneID" id="64031"/>
<dbReference type="KEGG" id="rno:64031"/>
<dbReference type="UCSC" id="RGD:620816">
    <molecule id="Q9JID1-1"/>
    <property type="organism name" value="rat"/>
</dbReference>
<dbReference type="AGR" id="RGD:620816"/>
<dbReference type="CTD" id="27250"/>
<dbReference type="RGD" id="620816">
    <property type="gene designation" value="Pdcd4"/>
</dbReference>
<dbReference type="eggNOG" id="KOG0403">
    <property type="taxonomic scope" value="Eukaryota"/>
</dbReference>
<dbReference type="GeneTree" id="ENSGT00390000015948"/>
<dbReference type="HOGENOM" id="CLU_025354_1_0_1"/>
<dbReference type="InParanoid" id="Q9JID1"/>
<dbReference type="OMA" id="TRTHPQY"/>
<dbReference type="OrthoDB" id="414546at2759"/>
<dbReference type="PhylomeDB" id="Q9JID1"/>
<dbReference type="TreeFam" id="TF323207"/>
<dbReference type="PRO" id="PR:Q9JID1"/>
<dbReference type="Proteomes" id="UP000002494">
    <property type="component" value="Chromosome 1"/>
</dbReference>
<dbReference type="Bgee" id="ENSRNOG00000014779">
    <property type="expression patterns" value="Expressed in pancreas and 20 other cell types or tissues"/>
</dbReference>
<dbReference type="ExpressionAtlas" id="Q9JID1">
    <property type="expression patterns" value="baseline and differential"/>
</dbReference>
<dbReference type="GO" id="GO:0005737">
    <property type="term" value="C:cytoplasm"/>
    <property type="evidence" value="ECO:0000250"/>
    <property type="project" value="UniProtKB"/>
</dbReference>
<dbReference type="GO" id="GO:0005829">
    <property type="term" value="C:cytosol"/>
    <property type="evidence" value="ECO:0000250"/>
    <property type="project" value="UniProtKB"/>
</dbReference>
<dbReference type="GO" id="GO:0005634">
    <property type="term" value="C:nucleus"/>
    <property type="evidence" value="ECO:0000314"/>
    <property type="project" value="BHF-UCL"/>
</dbReference>
<dbReference type="GO" id="GO:0003723">
    <property type="term" value="F:RNA binding"/>
    <property type="evidence" value="ECO:0007669"/>
    <property type="project" value="UniProtKB-KW"/>
</dbReference>
<dbReference type="GO" id="GO:0006915">
    <property type="term" value="P:apoptotic process"/>
    <property type="evidence" value="ECO:0007669"/>
    <property type="project" value="UniProtKB-KW"/>
</dbReference>
<dbReference type="GO" id="GO:0030509">
    <property type="term" value="P:BMP signaling pathway"/>
    <property type="evidence" value="ECO:0000266"/>
    <property type="project" value="RGD"/>
</dbReference>
<dbReference type="GO" id="GO:0071222">
    <property type="term" value="P:cellular response to lipopolysaccharide"/>
    <property type="evidence" value="ECO:0000266"/>
    <property type="project" value="RGD"/>
</dbReference>
<dbReference type="GO" id="GO:0060940">
    <property type="term" value="P:epithelial to mesenchymal transition involved in cardiac fibroblast development"/>
    <property type="evidence" value="ECO:0000316"/>
    <property type="project" value="BHF-UCL"/>
</dbReference>
<dbReference type="GO" id="GO:0043066">
    <property type="term" value="P:negative regulation of apoptotic process"/>
    <property type="evidence" value="ECO:0000314"/>
    <property type="project" value="RGD"/>
</dbReference>
<dbReference type="GO" id="GO:1900016">
    <property type="term" value="P:negative regulation of cytokine production involved in inflammatory response"/>
    <property type="evidence" value="ECO:0000266"/>
    <property type="project" value="RGD"/>
</dbReference>
<dbReference type="GO" id="GO:0045892">
    <property type="term" value="P:negative regulation of DNA-templated transcription"/>
    <property type="evidence" value="ECO:0000250"/>
    <property type="project" value="UniProtKB"/>
</dbReference>
<dbReference type="GO" id="GO:0043508">
    <property type="term" value="P:negative regulation of JUN kinase activity"/>
    <property type="evidence" value="ECO:0000250"/>
    <property type="project" value="UniProtKB"/>
</dbReference>
<dbReference type="GO" id="GO:1904761">
    <property type="term" value="P:negative regulation of myofibroblast differentiation"/>
    <property type="evidence" value="ECO:0000266"/>
    <property type="project" value="RGD"/>
</dbReference>
<dbReference type="GO" id="GO:1905064">
    <property type="term" value="P:negative regulation of vascular associated smooth muscle cell differentiation"/>
    <property type="evidence" value="ECO:0000266"/>
    <property type="project" value="RGD"/>
</dbReference>
<dbReference type="GO" id="GO:1904706">
    <property type="term" value="P:negative regulation of vascular associated smooth muscle cell proliferation"/>
    <property type="evidence" value="ECO:0000266"/>
    <property type="project" value="RGD"/>
</dbReference>
<dbReference type="GO" id="GO:2000353">
    <property type="term" value="P:positive regulation of endothelial cell apoptotic process"/>
    <property type="evidence" value="ECO:0000266"/>
    <property type="project" value="RGD"/>
</dbReference>
<dbReference type="GO" id="GO:0050729">
    <property type="term" value="P:positive regulation of inflammatory response"/>
    <property type="evidence" value="ECO:0000266"/>
    <property type="project" value="RGD"/>
</dbReference>
<dbReference type="GO" id="GO:1901224">
    <property type="term" value="P:positive regulation of non-canonical NF-kappaB signal transduction"/>
    <property type="evidence" value="ECO:0000266"/>
    <property type="project" value="RGD"/>
</dbReference>
<dbReference type="GO" id="GO:0034393">
    <property type="term" value="P:positive regulation of smooth muscle cell apoptotic process"/>
    <property type="evidence" value="ECO:0000315"/>
    <property type="project" value="RGD"/>
</dbReference>
<dbReference type="GO" id="GO:1905461">
    <property type="term" value="P:positive regulation of vascular associated smooth muscle cell apoptotic process"/>
    <property type="evidence" value="ECO:0000266"/>
    <property type="project" value="RGD"/>
</dbReference>
<dbReference type="GO" id="GO:0051246">
    <property type="term" value="P:regulation of protein metabolic process"/>
    <property type="evidence" value="ECO:0000315"/>
    <property type="project" value="RGD"/>
</dbReference>
<dbReference type="GO" id="GO:0043279">
    <property type="term" value="P:response to alkaloid"/>
    <property type="evidence" value="ECO:0000270"/>
    <property type="project" value="RGD"/>
</dbReference>
<dbReference type="GO" id="GO:0009725">
    <property type="term" value="P:response to hormone"/>
    <property type="evidence" value="ECO:0000270"/>
    <property type="project" value="RGD"/>
</dbReference>
<dbReference type="FunFam" id="1.25.40.180:FF:000008">
    <property type="entry name" value="Programmed cell death protein 4"/>
    <property type="match status" value="1"/>
</dbReference>
<dbReference type="FunFam" id="1.25.40.180:FF:000009">
    <property type="entry name" value="programmed cell death protein 4"/>
    <property type="match status" value="1"/>
</dbReference>
<dbReference type="Gene3D" id="1.25.40.180">
    <property type="match status" value="2"/>
</dbReference>
<dbReference type="InterPro" id="IPR016024">
    <property type="entry name" value="ARM-type_fold"/>
</dbReference>
<dbReference type="InterPro" id="IPR003891">
    <property type="entry name" value="Initiation_fac_eIF4g_MI"/>
</dbReference>
<dbReference type="InterPro" id="IPR039778">
    <property type="entry name" value="PDCD4"/>
</dbReference>
<dbReference type="PANTHER" id="PTHR12626">
    <property type="entry name" value="PROGRAMMED CELL DEATH 4"/>
    <property type="match status" value="1"/>
</dbReference>
<dbReference type="PANTHER" id="PTHR12626:SF3">
    <property type="entry name" value="PROGRAMMED CELL DEATH PROTEIN 4"/>
    <property type="match status" value="1"/>
</dbReference>
<dbReference type="Pfam" id="PF02847">
    <property type="entry name" value="MA3"/>
    <property type="match status" value="2"/>
</dbReference>
<dbReference type="SMART" id="SM00544">
    <property type="entry name" value="MA3"/>
    <property type="match status" value="2"/>
</dbReference>
<dbReference type="SUPFAM" id="SSF48371">
    <property type="entry name" value="ARM repeat"/>
    <property type="match status" value="2"/>
</dbReference>
<dbReference type="PROSITE" id="PS51366">
    <property type="entry name" value="MI"/>
    <property type="match status" value="2"/>
</dbReference>
<accession>Q9JID1</accession>
<feature type="chain" id="PRO_0000256522" description="Programmed cell death protein 4">
    <location>
        <begin position="1"/>
        <end position="469"/>
    </location>
</feature>
<feature type="domain" description="MI 1" evidence="4">
    <location>
        <begin position="163"/>
        <end position="284"/>
    </location>
</feature>
<feature type="domain" description="MI 2" evidence="4">
    <location>
        <begin position="326"/>
        <end position="449"/>
    </location>
</feature>
<feature type="region of interest" description="Disordered" evidence="5">
    <location>
        <begin position="1"/>
        <end position="30"/>
    </location>
</feature>
<feature type="region of interest" description="Disordered" evidence="5">
    <location>
        <begin position="58"/>
        <end position="128"/>
    </location>
</feature>
<feature type="short sequence motif" description="Nuclear localization signal" evidence="3">
    <location>
        <begin position="58"/>
        <end position="64"/>
    </location>
</feature>
<feature type="short sequence motif" description="Phosphodegron" evidence="1">
    <location>
        <begin position="70"/>
        <end position="76"/>
    </location>
</feature>
<feature type="short sequence motif" description="Nuclear localization signal" evidence="3">
    <location>
        <begin position="448"/>
        <end position="454"/>
    </location>
</feature>
<feature type="compositionally biased region" description="Polar residues" evidence="5">
    <location>
        <begin position="7"/>
        <end position="23"/>
    </location>
</feature>
<feature type="compositionally biased region" description="Gly residues" evidence="5">
    <location>
        <begin position="114"/>
        <end position="125"/>
    </location>
</feature>
<feature type="modified residue" description="N-acetylmethionine" evidence="2">
    <location>
        <position position="1"/>
    </location>
</feature>
<feature type="modified residue" description="Phosphoserine" evidence="9">
    <location>
        <position position="25"/>
    </location>
</feature>
<feature type="modified residue" description="Phosphoserine; by PKB and RPS6KB1" evidence="2">
    <location>
        <position position="67"/>
    </location>
</feature>
<feature type="modified residue" description="Phosphoserine" evidence="2">
    <location>
        <position position="68"/>
    </location>
</feature>
<feature type="modified residue" description="Phosphoserine" evidence="2">
    <location>
        <position position="71"/>
    </location>
</feature>
<feature type="modified residue" description="Phosphoserine" evidence="9">
    <location>
        <position position="76"/>
    </location>
</feature>
<feature type="modified residue" description="Phosphoserine" evidence="2">
    <location>
        <position position="78"/>
    </location>
</feature>
<feature type="modified residue" description="Phosphoserine" evidence="2">
    <location>
        <position position="94"/>
    </location>
</feature>
<feature type="modified residue" description="Phosphotyrosine" evidence="2">
    <location>
        <position position="152"/>
    </location>
</feature>
<feature type="modified residue" description="Phosphoserine" evidence="2">
    <location>
        <position position="313"/>
    </location>
</feature>
<feature type="modified residue" description="Phosphoserine" evidence="2">
    <location>
        <position position="317"/>
    </location>
</feature>
<feature type="modified residue" description="Phosphoserine" evidence="9">
    <location>
        <position position="457"/>
    </location>
</feature>
<feature type="splice variant" id="VSP_021356" description="In isoform 2." evidence="7">
    <location>
        <begin position="367"/>
        <end position="403"/>
    </location>
</feature>
<proteinExistence type="evidence at protein level"/>
<comment type="function">
    <text evidence="1 6">Inhibits translation initiation and cap-dependent translation. May excert its function by hindering the interaction between EIF4A1 and EIF4G. Inhibits the helicase activity of EIF4A. Modulates the activation of JUN kinase. Down-regulates the expression of MAP4K1, thus inhibiting events important in driving invasion, namely, MAPK85 activation and consequent JUN-dependent transcription. May play a role in apoptosis. Tumor suppressor. Inhibits tumor promoter-induced neoplastic transformation. Binds RNA (By similarity).</text>
</comment>
<comment type="subunit">
    <text evidence="1">Interacts (via MI domains) with EIF4A2 (By similarity). Interacts (via MI domains) with EIF4A1 (via N-terminal domain). Heterotrimer with EIF4A1; one molecule of PDCD4 binds two molecules of EIF4A1. Interacts with EIF4G1. May form a complex with EIF4A1 and EIF4G1. The interaction between PDCD4 and EIF4A1 interferes with the interaction between EIF4A1 and EIF4G. When phosphorylated, interacts with BTRC and FBXW11 (By similarity).</text>
</comment>
<comment type="subcellular location">
    <subcellularLocation>
        <location evidence="1">Nucleus</location>
    </subcellularLocation>
    <subcellularLocation>
        <location evidence="1">Cytoplasm</location>
    </subcellularLocation>
    <text evidence="1">Shuttles between the nucleus and cytoplasm. Predominantly nuclear under normal growth conditions, and when phosphorylated at Ser-457 (By similarity).</text>
</comment>
<comment type="alternative products">
    <event type="alternative splicing"/>
    <isoform>
        <id>Q9JID1-1</id>
        <name>1</name>
        <sequence type="displayed"/>
    </isoform>
    <isoform>
        <id>Q9JID1-2</id>
        <name>2</name>
        <sequence type="described" ref="VSP_021356"/>
    </isoform>
</comment>
<comment type="induction">
    <text evidence="6">Up-regulated by apoptotic inducers.</text>
</comment>
<comment type="domain">
    <text>Binds EIF4A1 via both MI domains.</text>
</comment>
<comment type="PTM">
    <text evidence="1">Polyubiquitinated, leading to its proteasomal degradation. Rapidly degraded in response to mitogens. Phosphorylation of the phosphodegron promotes interaction with BTRC and proteasomal degradation (By similarity).</text>
</comment>
<comment type="PTM">
    <text evidence="1">Phosphorylated at Ser-67 by RPS6KB1 in response to mitogens; phosphorylation promotes proteasomal degradation of PDCD4.</text>
</comment>
<comment type="similarity">
    <text evidence="8">Belongs to the PDCD4 family.</text>
</comment>
<reference key="1">
    <citation type="journal article" date="2002" name="Biochem. Biophys. Res. Commun.">
        <title>DUG is a novel homologue of translation initiation factor 4G that binds eIF4A.</title>
        <authorList>
            <person name="Goeke A."/>
            <person name="Goeke R."/>
            <person name="Knolle A."/>
            <person name="Trusheim H."/>
            <person name="Schmidt H."/>
            <person name="Wilmen A."/>
            <person name="Carmody R."/>
            <person name="Goeke B."/>
            <person name="Chen Y.H."/>
        </authorList>
    </citation>
    <scope>NUCLEOTIDE SEQUENCE [MRNA] (ISOFORMS 1 AND 2)</scope>
    <scope>FUNCTION</scope>
    <scope>INTERACTION WITH EIF4A1</scope>
    <scope>INDUCTION</scope>
    <scope>ALTERNATIVE SPLICING</scope>
</reference>
<reference key="2">
    <citation type="journal article" date="2006" name="Proc. Natl. Acad. Sci. U.S.A.">
        <title>Quantitative phosphoproteomics of vasopressin-sensitive renal cells: regulation of aquaporin-2 phosphorylation at two sites.</title>
        <authorList>
            <person name="Hoffert J.D."/>
            <person name="Pisitkun T."/>
            <person name="Wang G."/>
            <person name="Shen R.-F."/>
            <person name="Knepper M.A."/>
        </authorList>
    </citation>
    <scope>IDENTIFICATION BY MASS SPECTROMETRY [LARGE SCALE ANALYSIS]</scope>
</reference>
<reference key="3">
    <citation type="journal article" date="2012" name="Nat. Commun.">
        <title>Quantitative maps of protein phosphorylation sites across 14 different rat organs and tissues.</title>
        <authorList>
            <person name="Lundby A."/>
            <person name="Secher A."/>
            <person name="Lage K."/>
            <person name="Nordsborg N.B."/>
            <person name="Dmytriyev A."/>
            <person name="Lundby C."/>
            <person name="Olsen J.V."/>
        </authorList>
    </citation>
    <scope>PHOSPHORYLATION [LARGE SCALE ANALYSIS] AT SER-25; SER-76 AND SER-457</scope>
    <scope>IDENTIFICATION BY MASS SPECTROMETRY [LARGE SCALE ANALYSIS]</scope>
</reference>
<protein>
    <recommendedName>
        <fullName>Programmed cell death protein 4</fullName>
    </recommendedName>
    <alternativeName>
        <fullName>Death up-regulated gene protein</fullName>
    </alternativeName>
</protein>
<organism>
    <name type="scientific">Rattus norvegicus</name>
    <name type="common">Rat</name>
    <dbReference type="NCBI Taxonomy" id="10116"/>
    <lineage>
        <taxon>Eukaryota</taxon>
        <taxon>Metazoa</taxon>
        <taxon>Chordata</taxon>
        <taxon>Craniata</taxon>
        <taxon>Vertebrata</taxon>
        <taxon>Euteleostomi</taxon>
        <taxon>Mammalia</taxon>
        <taxon>Eutheria</taxon>
        <taxon>Euarchontoglires</taxon>
        <taxon>Glires</taxon>
        <taxon>Rodentia</taxon>
        <taxon>Myomorpha</taxon>
        <taxon>Muroidea</taxon>
        <taxon>Muridae</taxon>
        <taxon>Murinae</taxon>
        <taxon>Rattus</taxon>
    </lineage>
</organism>
<sequence length="469" mass="51736">MDVENEQILNVNPTDPDNLSDSLFSGDEENAGTEEIKNEINGNWISASTINEARINAKAKRRLRKNSSRDSGRGDSVSDNGSEAVRSGVAVPTSPKGRLLDRRSRSGKGRGLPKKGGAGGKGVWGTPGQVYDVEEVDVKDPNYDDDQENCVYETVVLPLDETAFEKTLTPIIQEYFEHGDTNEVAEMLRDLNLGEMKSGVPVLAVSLALEGKASHREMTSKLLSDLCGTVMSTNDVEKSFDKLLKDLPELALDTPRAPQLVGQFIARAVGDGILCNTYIDSYKGTVDCVQARAALDKATVLLSMSKGGKRKDSVWGSGGGQQPVNHLVKEIDMLLKEYLLSGDMSEAEHCLKELEVPHFHHELVYEAIVMVLESTGESAFKMMLDLLKSLWKSSTITIDQMKRGYERIYNEIPDINLDVPHSYSVLERFVEECFQAGIISKQLRDLCPSRGRKRFVSEGDGGRLKPESY</sequence>